<name>VATE_ACET2</name>
<dbReference type="EMBL" id="CP000568">
    <property type="protein sequence ID" value="ABN53466.1"/>
    <property type="molecule type" value="Genomic_DNA"/>
</dbReference>
<dbReference type="RefSeq" id="WP_003513521.1">
    <property type="nucleotide sequence ID" value="NC_009012.1"/>
</dbReference>
<dbReference type="SMR" id="A3DHN7"/>
<dbReference type="STRING" id="203119.Cthe_2264"/>
<dbReference type="GeneID" id="35803709"/>
<dbReference type="KEGG" id="cth:Cthe_2264"/>
<dbReference type="eggNOG" id="COG1390">
    <property type="taxonomic scope" value="Bacteria"/>
</dbReference>
<dbReference type="HOGENOM" id="CLU_105846_0_0_9"/>
<dbReference type="OrthoDB" id="1734087at2"/>
<dbReference type="Proteomes" id="UP000002145">
    <property type="component" value="Chromosome"/>
</dbReference>
<dbReference type="GO" id="GO:0033178">
    <property type="term" value="C:proton-transporting two-sector ATPase complex, catalytic domain"/>
    <property type="evidence" value="ECO:0007669"/>
    <property type="project" value="InterPro"/>
</dbReference>
<dbReference type="GO" id="GO:0005524">
    <property type="term" value="F:ATP binding"/>
    <property type="evidence" value="ECO:0007669"/>
    <property type="project" value="UniProtKB-UniRule"/>
</dbReference>
<dbReference type="GO" id="GO:0046933">
    <property type="term" value="F:proton-transporting ATP synthase activity, rotational mechanism"/>
    <property type="evidence" value="ECO:0007669"/>
    <property type="project" value="UniProtKB-UniRule"/>
</dbReference>
<dbReference type="GO" id="GO:0046961">
    <property type="term" value="F:proton-transporting ATPase activity, rotational mechanism"/>
    <property type="evidence" value="ECO:0007669"/>
    <property type="project" value="InterPro"/>
</dbReference>
<dbReference type="GO" id="GO:0042777">
    <property type="term" value="P:proton motive force-driven plasma membrane ATP synthesis"/>
    <property type="evidence" value="ECO:0007669"/>
    <property type="project" value="UniProtKB-UniRule"/>
</dbReference>
<dbReference type="Gene3D" id="3.30.2320.30">
    <property type="entry name" value="ATP synthase, E subunit, C-terminal"/>
    <property type="match status" value="1"/>
</dbReference>
<dbReference type="Gene3D" id="1.20.5.620">
    <property type="entry name" value="F1F0 ATP synthase subunit B, membrane domain"/>
    <property type="match status" value="1"/>
</dbReference>
<dbReference type="HAMAP" id="MF_00311">
    <property type="entry name" value="ATP_synth_E_arch"/>
    <property type="match status" value="1"/>
</dbReference>
<dbReference type="InterPro" id="IPR038495">
    <property type="entry name" value="ATPase_E_C"/>
</dbReference>
<dbReference type="InterPro" id="IPR002842">
    <property type="entry name" value="ATPase_V1_Esu"/>
</dbReference>
<dbReference type="Pfam" id="PF01991">
    <property type="entry name" value="vATP-synt_E"/>
    <property type="match status" value="1"/>
</dbReference>
<dbReference type="SUPFAM" id="SSF160527">
    <property type="entry name" value="V-type ATPase subunit E-like"/>
    <property type="match status" value="1"/>
</dbReference>
<organism>
    <name type="scientific">Acetivibrio thermocellus (strain ATCC 27405 / DSM 1237 / JCM 9322 / NBRC 103400 / NCIMB 10682 / NRRL B-4536 / VPI 7372)</name>
    <name type="common">Clostridium thermocellum</name>
    <dbReference type="NCBI Taxonomy" id="203119"/>
    <lineage>
        <taxon>Bacteria</taxon>
        <taxon>Bacillati</taxon>
        <taxon>Bacillota</taxon>
        <taxon>Clostridia</taxon>
        <taxon>Eubacteriales</taxon>
        <taxon>Oscillospiraceae</taxon>
        <taxon>Acetivibrio</taxon>
    </lineage>
</organism>
<sequence length="198" mass="22320">MAGVEKIKERILEEARAQAEANIKRAEEEAAKIIEEAQKEAAAKKAQILEKAKQEAVDVKKRLKAMAELEARKKKLQARQEVVDEAFNKTIEKLNSLPDREYEEIISQMIVNSVESGSEEIILSPKDKQRISPGFIENINKKLSQKGIDGKIKLSEETKNISGGFILKSGDIEINNSFEAIIRMKREEVEAEVIKALF</sequence>
<gene>
    <name evidence="1" type="primary">atpE</name>
    <name type="ordered locus">Cthe_2264</name>
</gene>
<feature type="chain" id="PRO_0000322521" description="V-type ATP synthase subunit E">
    <location>
        <begin position="1"/>
        <end position="198"/>
    </location>
</feature>
<protein>
    <recommendedName>
        <fullName>V-type ATP synthase subunit E</fullName>
    </recommendedName>
    <alternativeName>
        <fullName evidence="1">V-ATPase subunit E</fullName>
    </alternativeName>
</protein>
<accession>A3DHN7</accession>
<comment type="function">
    <text evidence="1">Produces ATP from ADP in the presence of a proton gradient across the membrane.</text>
</comment>
<comment type="similarity">
    <text evidence="1">Belongs to the V-ATPase E subunit family.</text>
</comment>
<keyword id="KW-0066">ATP synthesis</keyword>
<keyword id="KW-0375">Hydrogen ion transport</keyword>
<keyword id="KW-0406">Ion transport</keyword>
<keyword id="KW-1185">Reference proteome</keyword>
<keyword id="KW-0813">Transport</keyword>
<reference key="1">
    <citation type="submission" date="2007-02" db="EMBL/GenBank/DDBJ databases">
        <title>Complete sequence of Clostridium thermocellum ATCC 27405.</title>
        <authorList>
            <consortium name="US DOE Joint Genome Institute"/>
            <person name="Copeland A."/>
            <person name="Lucas S."/>
            <person name="Lapidus A."/>
            <person name="Barry K."/>
            <person name="Detter J.C."/>
            <person name="Glavina del Rio T."/>
            <person name="Hammon N."/>
            <person name="Israni S."/>
            <person name="Dalin E."/>
            <person name="Tice H."/>
            <person name="Pitluck S."/>
            <person name="Chertkov O."/>
            <person name="Brettin T."/>
            <person name="Bruce D."/>
            <person name="Han C."/>
            <person name="Tapia R."/>
            <person name="Gilna P."/>
            <person name="Schmutz J."/>
            <person name="Larimer F."/>
            <person name="Land M."/>
            <person name="Hauser L."/>
            <person name="Kyrpides N."/>
            <person name="Mikhailova N."/>
            <person name="Wu J.H.D."/>
            <person name="Newcomb M."/>
            <person name="Richardson P."/>
        </authorList>
    </citation>
    <scope>NUCLEOTIDE SEQUENCE [LARGE SCALE GENOMIC DNA]</scope>
    <source>
        <strain>ATCC 27405 / DSM 1237 / JCM 9322 / NBRC 103400 / NCIMB 10682 / NRRL B-4536 / VPI 7372</strain>
    </source>
</reference>
<evidence type="ECO:0000255" key="1">
    <source>
        <dbReference type="HAMAP-Rule" id="MF_00311"/>
    </source>
</evidence>
<proteinExistence type="inferred from homology"/>